<comment type="function">
    <text evidence="1">Subunit of the oligosaccharyl transferase (OST) complex that catalyzes the initial transfer of a defined glycan (Glc(3)Man(9)GlcNAc(2) in eukaryotes) from the lipid carrier dolichol-pyrophosphate to an asparagine residue within an Asn-X-Ser/Thr consensus motif in nascent polypeptide chains, the first step in protein N-glycosylation. N-glycosylation occurs cotranslationally and the complex associates with the Sec61 complex at the channel-forming translocon complex that mediates protein translocation across the endoplasmic reticulum (ER). All subunits are required for a maximal enzyme activity.</text>
</comment>
<comment type="pathway">
    <text evidence="2">Protein modification; protein glycosylation.</text>
</comment>
<comment type="subunit">
    <text evidence="1">Component of the oligosaccharyltransferase (OST) complex. OST exists in two different complex forms which contain common core subunits RPN1, RPN2, OST48, OST4, DAD1 and TMEM258, either STT3A or STT3B as catalytic subunits, and form-specific accessory subunits. STT3A complex assembly occurs through the formation of 3 subcomplexes. Subcomplex 1 contains RPN1 and TMEM258, subcomplex 2 contains the STT3A-specific subunits STT3A, DC2/OSTC, and KCP2 as well as the core subunit OST4, and subcomplex 3 contains RPN2, DAD1, and OST48. The STT3A complex can form stable complexes with the Sec61 complex or with both the Sec61 and TRAP complexes.</text>
</comment>
<comment type="subcellular location">
    <subcellularLocation>
        <location>Endoplasmic reticulum membrane</location>
        <topology evidence="4">Multi-pass membrane protein</topology>
    </subcellularLocation>
</comment>
<comment type="similarity">
    <text evidence="4">Belongs to the DAD/OST2 family.</text>
</comment>
<reference key="1">
    <citation type="submission" date="2005-12" db="EMBL/GenBank/DDBJ databases">
        <title>Genomic sequencing of the T cell receptor alpha locus.</title>
        <authorList>
            <person name="Conrad M.L."/>
            <person name="Mawer M.A."/>
            <person name="Davis S.K."/>
            <person name="Koop B.F."/>
        </authorList>
    </citation>
    <scope>NUCLEOTIDE SEQUENCE [GENOMIC DNA]</scope>
</reference>
<reference key="2">
    <citation type="journal article" date="2005" name="BMC Genomics">
        <title>Characterization of 954 bovine full-CDS cDNA sequences.</title>
        <authorList>
            <person name="Harhay G.P."/>
            <person name="Sonstegard T.S."/>
            <person name="Keele J.W."/>
            <person name="Heaton M.P."/>
            <person name="Clawson M.L."/>
            <person name="Snelling W.M."/>
            <person name="Wiedmann R.T."/>
            <person name="Van Tassell C.P."/>
            <person name="Smith T.P.L."/>
        </authorList>
    </citation>
    <scope>NUCLEOTIDE SEQUENCE [LARGE SCALE MRNA]</scope>
</reference>
<reference key="3">
    <citation type="submission" date="2005-08" db="EMBL/GenBank/DDBJ databases">
        <authorList>
            <consortium name="NIH - Mammalian Gene Collection (MGC) project"/>
        </authorList>
    </citation>
    <scope>NUCLEOTIDE SEQUENCE [LARGE SCALE MRNA]</scope>
    <source>
        <strain>Crossbred X Angus</strain>
        <tissue>Ileum</tissue>
    </source>
</reference>
<dbReference type="EMBL" id="AY227782">
    <property type="protein sequence ID" value="AAT39322.2"/>
    <property type="molecule type" value="Genomic_DNA"/>
</dbReference>
<dbReference type="EMBL" id="BT020998">
    <property type="protein sequence ID" value="AAX09015.1"/>
    <property type="molecule type" value="mRNA"/>
</dbReference>
<dbReference type="EMBL" id="BC102081">
    <property type="protein sequence ID" value="AAI02082.1"/>
    <property type="molecule type" value="mRNA"/>
</dbReference>
<dbReference type="RefSeq" id="NP_001029933.1">
    <property type="nucleotide sequence ID" value="NM_001034761.1"/>
</dbReference>
<dbReference type="RefSeq" id="XP_005211450.1">
    <property type="nucleotide sequence ID" value="XM_005211393.5"/>
</dbReference>
<dbReference type="SMR" id="Q5E9C2"/>
<dbReference type="FunCoup" id="Q5E9C2">
    <property type="interactions" value="3092"/>
</dbReference>
<dbReference type="STRING" id="9913.ENSBTAP00000025397"/>
<dbReference type="PaxDb" id="9913-ENSBTAP00000025397"/>
<dbReference type="GeneID" id="614538"/>
<dbReference type="KEGG" id="bta:614538"/>
<dbReference type="CTD" id="1603"/>
<dbReference type="VEuPathDB" id="HostDB:ENSBTAG00000019077"/>
<dbReference type="eggNOG" id="KOG1746">
    <property type="taxonomic scope" value="Eukaryota"/>
</dbReference>
<dbReference type="HOGENOM" id="CLU_111220_2_1_1"/>
<dbReference type="InParanoid" id="Q5E9C2"/>
<dbReference type="OMA" id="HIILHIV"/>
<dbReference type="OrthoDB" id="445566at2759"/>
<dbReference type="TreeFam" id="TF312846"/>
<dbReference type="UniPathway" id="UPA00378"/>
<dbReference type="Proteomes" id="UP000009136">
    <property type="component" value="Chromosome 10"/>
</dbReference>
<dbReference type="Bgee" id="ENSBTAG00000019077">
    <property type="expression patterns" value="Expressed in oocyte and 105 other cell types or tissues"/>
</dbReference>
<dbReference type="GO" id="GO:0008250">
    <property type="term" value="C:oligosaccharyltransferase complex"/>
    <property type="evidence" value="ECO:0000250"/>
    <property type="project" value="UniProtKB"/>
</dbReference>
<dbReference type="GO" id="GO:0160226">
    <property type="term" value="C:oligosaccharyltransferase complex A"/>
    <property type="evidence" value="ECO:0007669"/>
    <property type="project" value="Ensembl"/>
</dbReference>
<dbReference type="GO" id="GO:0160227">
    <property type="term" value="C:oligosaccharyltransferase complex B"/>
    <property type="evidence" value="ECO:0007669"/>
    <property type="project" value="Ensembl"/>
</dbReference>
<dbReference type="GO" id="GO:0008047">
    <property type="term" value="F:enzyme activator activity"/>
    <property type="evidence" value="ECO:0007669"/>
    <property type="project" value="Ensembl"/>
</dbReference>
<dbReference type="GO" id="GO:0006915">
    <property type="term" value="P:apoptotic process"/>
    <property type="evidence" value="ECO:0007669"/>
    <property type="project" value="UniProtKB-KW"/>
</dbReference>
<dbReference type="GO" id="GO:0001824">
    <property type="term" value="P:blastocyst development"/>
    <property type="evidence" value="ECO:0007669"/>
    <property type="project" value="Ensembl"/>
</dbReference>
<dbReference type="GO" id="GO:0043066">
    <property type="term" value="P:negative regulation of apoptotic process"/>
    <property type="evidence" value="ECO:0007669"/>
    <property type="project" value="Ensembl"/>
</dbReference>
<dbReference type="GO" id="GO:0006486">
    <property type="term" value="P:protein glycosylation"/>
    <property type="evidence" value="ECO:0000250"/>
    <property type="project" value="UniProtKB"/>
</dbReference>
<dbReference type="GO" id="GO:0006487">
    <property type="term" value="P:protein N-linked glycosylation"/>
    <property type="evidence" value="ECO:0000318"/>
    <property type="project" value="GO_Central"/>
</dbReference>
<dbReference type="GO" id="GO:0018279">
    <property type="term" value="P:protein N-linked glycosylation via asparagine"/>
    <property type="evidence" value="ECO:0007669"/>
    <property type="project" value="Ensembl"/>
</dbReference>
<dbReference type="GO" id="GO:0031647">
    <property type="term" value="P:regulation of protein stability"/>
    <property type="evidence" value="ECO:0007669"/>
    <property type="project" value="Ensembl"/>
</dbReference>
<dbReference type="InterPro" id="IPR003038">
    <property type="entry name" value="DAD/Ost2"/>
</dbReference>
<dbReference type="PANTHER" id="PTHR10705">
    <property type="entry name" value="DOLICHYL-DIPHOSPHOOLIGOSACCHARIDE--PROTEIN GLYCOSYLTRANSFERASE SUBUNIT DAD1"/>
    <property type="match status" value="1"/>
</dbReference>
<dbReference type="PANTHER" id="PTHR10705:SF0">
    <property type="entry name" value="DOLICHYL-DIPHOSPHOOLIGOSACCHARIDE--PROTEIN GLYCOSYLTRANSFERASE SUBUNIT DAD1"/>
    <property type="match status" value="1"/>
</dbReference>
<dbReference type="Pfam" id="PF02109">
    <property type="entry name" value="DAD"/>
    <property type="match status" value="1"/>
</dbReference>
<dbReference type="PIRSF" id="PIRSF005588">
    <property type="entry name" value="DAD"/>
    <property type="match status" value="1"/>
</dbReference>
<name>DAD1_BOVIN</name>
<keyword id="KW-0007">Acetylation</keyword>
<keyword id="KW-0053">Apoptosis</keyword>
<keyword id="KW-0256">Endoplasmic reticulum</keyword>
<keyword id="KW-0472">Membrane</keyword>
<keyword id="KW-1185">Reference proteome</keyword>
<keyword id="KW-0812">Transmembrane</keyword>
<keyword id="KW-1133">Transmembrane helix</keyword>
<protein>
    <recommendedName>
        <fullName evidence="2">Dolichyl-diphosphooligosaccharide--protein glycosyltransferase subunit DAD1</fullName>
        <shortName>Oligosaccharyl transferase subunit DAD1</shortName>
    </recommendedName>
    <alternativeName>
        <fullName>Defender against cell death 1</fullName>
        <shortName>DAD-1</shortName>
    </alternativeName>
</protein>
<gene>
    <name evidence="2" type="primary">DAD1</name>
</gene>
<proteinExistence type="inferred from homology"/>
<evidence type="ECO:0000250" key="1">
    <source>
        <dbReference type="UniProtKB" id="E2R4X3"/>
    </source>
</evidence>
<evidence type="ECO:0000250" key="2">
    <source>
        <dbReference type="UniProtKB" id="P61803"/>
    </source>
</evidence>
<evidence type="ECO:0000255" key="3"/>
<evidence type="ECO:0000305" key="4"/>
<accession>Q5E9C2</accession>
<accession>Q3T175</accession>
<accession>Q53ZY7</accession>
<sequence>MSASVLSVISRFLEEYLSATPQRLKLLDAYLLYILLTGALQFGYCLLVGTFPFNSFLSGFISCVGSFILAVCLRIQINPQNKADFQGISPERAFADFLFASTILHLVVMNFVG</sequence>
<organism>
    <name type="scientific">Bos taurus</name>
    <name type="common">Bovine</name>
    <dbReference type="NCBI Taxonomy" id="9913"/>
    <lineage>
        <taxon>Eukaryota</taxon>
        <taxon>Metazoa</taxon>
        <taxon>Chordata</taxon>
        <taxon>Craniata</taxon>
        <taxon>Vertebrata</taxon>
        <taxon>Euteleostomi</taxon>
        <taxon>Mammalia</taxon>
        <taxon>Eutheria</taxon>
        <taxon>Laurasiatheria</taxon>
        <taxon>Artiodactyla</taxon>
        <taxon>Ruminantia</taxon>
        <taxon>Pecora</taxon>
        <taxon>Bovidae</taxon>
        <taxon>Bovinae</taxon>
        <taxon>Bos</taxon>
    </lineage>
</organism>
<feature type="initiator methionine" description="Removed" evidence="2">
    <location>
        <position position="1"/>
    </location>
</feature>
<feature type="chain" id="PRO_0000124008" description="Dolichyl-diphosphooligosaccharide--protein glycosyltransferase subunit DAD1">
    <location>
        <begin position="2"/>
        <end position="113"/>
    </location>
</feature>
<feature type="topological domain" description="Cytoplasmic" evidence="3">
    <location>
        <begin position="2"/>
        <end position="30"/>
    </location>
</feature>
<feature type="transmembrane region" description="Helical" evidence="3">
    <location>
        <begin position="31"/>
        <end position="51"/>
    </location>
</feature>
<feature type="topological domain" description="Lumenal" evidence="3">
    <location>
        <position position="52"/>
    </location>
</feature>
<feature type="transmembrane region" description="Helical" evidence="3">
    <location>
        <begin position="53"/>
        <end position="73"/>
    </location>
</feature>
<feature type="topological domain" description="Cytoplasmic" evidence="3">
    <location>
        <begin position="74"/>
        <end position="92"/>
    </location>
</feature>
<feature type="transmembrane region" description="Helical" evidence="3">
    <location>
        <begin position="93"/>
        <end position="113"/>
    </location>
</feature>
<feature type="modified residue" description="N-acetylserine" evidence="2">
    <location>
        <position position="2"/>
    </location>
</feature>